<name>LRC3B_MOUSE</name>
<evidence type="ECO:0000255" key="1"/>
<evidence type="ECO:0000305" key="2"/>
<keyword id="KW-0325">Glycoprotein</keyword>
<keyword id="KW-0433">Leucine-rich repeat</keyword>
<keyword id="KW-0472">Membrane</keyword>
<keyword id="KW-1185">Reference proteome</keyword>
<keyword id="KW-0677">Repeat</keyword>
<keyword id="KW-0732">Signal</keyword>
<keyword id="KW-0812">Transmembrane</keyword>
<keyword id="KW-1133">Transmembrane helix</keyword>
<dbReference type="EMBL" id="BC019794">
    <property type="protein sequence ID" value="AAH19794.1"/>
    <property type="molecule type" value="mRNA"/>
</dbReference>
<dbReference type="CCDS" id="CCDS26829.1"/>
<dbReference type="RefSeq" id="NP_001412670.1">
    <property type="nucleotide sequence ID" value="NM_001425741.1"/>
</dbReference>
<dbReference type="RefSeq" id="NP_001412671.1">
    <property type="nucleotide sequence ID" value="NM_001425742.1"/>
</dbReference>
<dbReference type="RefSeq" id="NP_666164.1">
    <property type="nucleotide sequence ID" value="NM_146052.5"/>
</dbReference>
<dbReference type="RefSeq" id="XP_006518068.1">
    <property type="nucleotide sequence ID" value="XM_006518005.3"/>
</dbReference>
<dbReference type="RefSeq" id="XP_006518069.1">
    <property type="nucleotide sequence ID" value="XM_006518006.3"/>
</dbReference>
<dbReference type="SMR" id="Q8VCH9"/>
<dbReference type="BioGRID" id="230061">
    <property type="interactions" value="1"/>
</dbReference>
<dbReference type="FunCoup" id="Q8VCH9">
    <property type="interactions" value="181"/>
</dbReference>
<dbReference type="STRING" id="10090.ENSMUSP00000059463"/>
<dbReference type="GlyCosmos" id="Q8VCH9">
    <property type="glycosylation" value="2 sites, No reported glycans"/>
</dbReference>
<dbReference type="GlyGen" id="Q8VCH9">
    <property type="glycosylation" value="2 sites, 1 N-linked glycan (1 site)"/>
</dbReference>
<dbReference type="iPTMnet" id="Q8VCH9"/>
<dbReference type="PhosphoSitePlus" id="Q8VCH9"/>
<dbReference type="PaxDb" id="10090-ENSMUSP00000059463"/>
<dbReference type="ProteomicsDB" id="287268"/>
<dbReference type="Antibodypedia" id="2670">
    <property type="antibodies" value="99 antibodies from 21 providers"/>
</dbReference>
<dbReference type="Ensembl" id="ENSMUST00000055211.6">
    <property type="protein sequence ID" value="ENSMUSP00000059463.5"/>
    <property type="gene ID" value="ENSMUSG00000045201.7"/>
</dbReference>
<dbReference type="Ensembl" id="ENSMUST00000163937.3">
    <property type="protein sequence ID" value="ENSMUSP00000128624.2"/>
    <property type="gene ID" value="ENSMUSG00000045201.7"/>
</dbReference>
<dbReference type="Ensembl" id="ENSMUST00000223700.2">
    <property type="protein sequence ID" value="ENSMUSP00000153616.2"/>
    <property type="gene ID" value="ENSMUSG00000045201.7"/>
</dbReference>
<dbReference type="GeneID" id="218763"/>
<dbReference type="KEGG" id="mmu:218763"/>
<dbReference type="UCSC" id="uc007sgt.3">
    <property type="organism name" value="mouse"/>
</dbReference>
<dbReference type="AGR" id="MGI:2384996"/>
<dbReference type="CTD" id="116135"/>
<dbReference type="MGI" id="MGI:2384996">
    <property type="gene designation" value="Lrrc3b"/>
</dbReference>
<dbReference type="VEuPathDB" id="HostDB:ENSMUSG00000045201"/>
<dbReference type="eggNOG" id="KOG4237">
    <property type="taxonomic scope" value="Eukaryota"/>
</dbReference>
<dbReference type="GeneTree" id="ENSGT00940000157780"/>
<dbReference type="HOGENOM" id="CLU_064640_0_0_1"/>
<dbReference type="InParanoid" id="Q8VCH9"/>
<dbReference type="OMA" id="PKGCACQ"/>
<dbReference type="OrthoDB" id="10068119at2759"/>
<dbReference type="PhylomeDB" id="Q8VCH9"/>
<dbReference type="TreeFam" id="TF327070"/>
<dbReference type="BioGRID-ORCS" id="218763">
    <property type="hits" value="1 hit in 77 CRISPR screens"/>
</dbReference>
<dbReference type="ChiTaRS" id="Lrrc3b">
    <property type="organism name" value="mouse"/>
</dbReference>
<dbReference type="PRO" id="PR:Q8VCH9"/>
<dbReference type="Proteomes" id="UP000000589">
    <property type="component" value="Chromosome 14"/>
</dbReference>
<dbReference type="RNAct" id="Q8VCH9">
    <property type="molecule type" value="protein"/>
</dbReference>
<dbReference type="Bgee" id="ENSMUSG00000045201">
    <property type="expression patterns" value="Expressed in habenula and 155 other cell types or tissues"/>
</dbReference>
<dbReference type="ExpressionAtlas" id="Q8VCH9">
    <property type="expression patterns" value="baseline and differential"/>
</dbReference>
<dbReference type="GO" id="GO:0016020">
    <property type="term" value="C:membrane"/>
    <property type="evidence" value="ECO:0007669"/>
    <property type="project" value="UniProtKB-SubCell"/>
</dbReference>
<dbReference type="FunFam" id="3.80.10.10:FF:000069">
    <property type="entry name" value="leucine-rich repeat-containing protein 3B"/>
    <property type="match status" value="1"/>
</dbReference>
<dbReference type="Gene3D" id="3.80.10.10">
    <property type="entry name" value="Ribonuclease Inhibitor"/>
    <property type="match status" value="1"/>
</dbReference>
<dbReference type="InterPro" id="IPR001611">
    <property type="entry name" value="Leu-rich_rpt"/>
</dbReference>
<dbReference type="InterPro" id="IPR003591">
    <property type="entry name" value="Leu-rich_rpt_typical-subtyp"/>
</dbReference>
<dbReference type="InterPro" id="IPR032675">
    <property type="entry name" value="LRR_dom_sf"/>
</dbReference>
<dbReference type="InterPro" id="IPR000372">
    <property type="entry name" value="LRRNT"/>
</dbReference>
<dbReference type="PANTHER" id="PTHR24366">
    <property type="entry name" value="IG(IMMUNOGLOBULIN) AND LRR(LEUCINE RICH REPEAT) DOMAINS"/>
    <property type="match status" value="1"/>
</dbReference>
<dbReference type="PANTHER" id="PTHR24366:SF96">
    <property type="entry name" value="LEUCINE RICH REPEAT CONTAINING 53"/>
    <property type="match status" value="1"/>
</dbReference>
<dbReference type="Pfam" id="PF00560">
    <property type="entry name" value="LRR_1"/>
    <property type="match status" value="1"/>
</dbReference>
<dbReference type="Pfam" id="PF13855">
    <property type="entry name" value="LRR_8"/>
    <property type="match status" value="1"/>
</dbReference>
<dbReference type="Pfam" id="PF01462">
    <property type="entry name" value="LRRNT"/>
    <property type="match status" value="1"/>
</dbReference>
<dbReference type="SMART" id="SM00369">
    <property type="entry name" value="LRR_TYP"/>
    <property type="match status" value="3"/>
</dbReference>
<dbReference type="SMART" id="SM00013">
    <property type="entry name" value="LRRNT"/>
    <property type="match status" value="1"/>
</dbReference>
<dbReference type="SUPFAM" id="SSF52058">
    <property type="entry name" value="L domain-like"/>
    <property type="match status" value="1"/>
</dbReference>
<dbReference type="PROSITE" id="PS51450">
    <property type="entry name" value="LRR"/>
    <property type="match status" value="3"/>
</dbReference>
<feature type="signal peptide" evidence="1">
    <location>
        <begin position="1"/>
        <end position="33"/>
    </location>
</feature>
<feature type="chain" id="PRO_0000021617" description="Leucine-rich repeat-containing protein 3B">
    <location>
        <begin position="34"/>
        <end position="259"/>
    </location>
</feature>
<feature type="transmembrane region" description="Helical" evidence="1">
    <location>
        <begin position="205"/>
        <end position="225"/>
    </location>
</feature>
<feature type="domain" description="LRRNT">
    <location>
        <begin position="34"/>
        <end position="64"/>
    </location>
</feature>
<feature type="repeat" description="LRR 1">
    <location>
        <begin position="65"/>
        <end position="86"/>
    </location>
</feature>
<feature type="repeat" description="LRR 2">
    <location>
        <begin position="89"/>
        <end position="110"/>
    </location>
</feature>
<feature type="repeat" description="LRR 3">
    <location>
        <begin position="114"/>
        <end position="135"/>
    </location>
</feature>
<feature type="domain" description="LRRCT">
    <location>
        <begin position="145"/>
        <end position="197"/>
    </location>
</feature>
<feature type="glycosylation site" description="N-linked (GlcNAc...) asparagine" evidence="1">
    <location>
        <position position="47"/>
    </location>
</feature>
<feature type="glycosylation site" description="N-linked (GlcNAc...) asparagine" evidence="1">
    <location>
        <position position="94"/>
    </location>
</feature>
<proteinExistence type="evidence at transcript level"/>
<comment type="subcellular location">
    <subcellularLocation>
        <location evidence="2">Membrane</location>
        <topology evidence="2">Single-pass membrane protein</topology>
    </subcellularLocation>
</comment>
<comment type="similarity">
    <text evidence="2">Belongs to the LRRC3 family.</text>
</comment>
<protein>
    <recommendedName>
        <fullName>Leucine-rich repeat-containing protein 3B</fullName>
    </recommendedName>
    <alternativeName>
        <fullName>Leucine-rich repeat protein 15</fullName>
    </alternativeName>
</protein>
<sequence>MNLVDLWLSRSLSMCLLLQSFVLMILCFHSASMCPKGCLCSSSGGLNVTCSNANLKEIPRDLPPETVLLYLDSNQITSIPNEIFKDLHQLRVLNLSKNGIEFIDEHAFKGVAETLQTLDLSDNRIQSVHKNAFNNLKARARIANNPWHCDCTLQQVLRSMASNHETAHNVICKTSVLDEHAGRPFLNAANDADLCNLPKKTTDYAMLVTMFGWFTMVISYVVYYVRQNQEDARRHLEYLKSLPSRQKKADEPDDISTVV</sequence>
<accession>Q8VCH9</accession>
<reference key="1">
    <citation type="journal article" date="2004" name="Genome Res.">
        <title>The status, quality, and expansion of the NIH full-length cDNA project: the Mammalian Gene Collection (MGC).</title>
        <authorList>
            <consortium name="The MGC Project Team"/>
        </authorList>
    </citation>
    <scope>NUCLEOTIDE SEQUENCE [LARGE SCALE MRNA]</scope>
    <source>
        <tissue>Retina</tissue>
    </source>
</reference>
<gene>
    <name type="primary">Lrrc3b</name>
    <name type="synonym">Lrp15</name>
</gene>
<organism>
    <name type="scientific">Mus musculus</name>
    <name type="common">Mouse</name>
    <dbReference type="NCBI Taxonomy" id="10090"/>
    <lineage>
        <taxon>Eukaryota</taxon>
        <taxon>Metazoa</taxon>
        <taxon>Chordata</taxon>
        <taxon>Craniata</taxon>
        <taxon>Vertebrata</taxon>
        <taxon>Euteleostomi</taxon>
        <taxon>Mammalia</taxon>
        <taxon>Eutheria</taxon>
        <taxon>Euarchontoglires</taxon>
        <taxon>Glires</taxon>
        <taxon>Rodentia</taxon>
        <taxon>Myomorpha</taxon>
        <taxon>Muroidea</taxon>
        <taxon>Muridae</taxon>
        <taxon>Murinae</taxon>
        <taxon>Mus</taxon>
        <taxon>Mus</taxon>
    </lineage>
</organism>